<gene>
    <name type="primary">GK2</name>
    <name type="synonym">GKP2</name>
    <name type="synonym">GKTA</name>
</gene>
<accession>Q14410</accession>
<accession>A8K876</accession>
<accession>Q6PD73</accession>
<accession>Q86XV8</accession>
<evidence type="ECO:0000250" key="1"/>
<evidence type="ECO:0000250" key="2">
    <source>
        <dbReference type="UniProtKB" id="Q9WU65"/>
    </source>
</evidence>
<evidence type="ECO:0000255" key="3"/>
<evidence type="ECO:0000269" key="4">
    <source>
    </source>
</evidence>
<evidence type="ECO:0000269" key="5">
    <source>
    </source>
</evidence>
<evidence type="ECO:0000305" key="6"/>
<keyword id="KW-0067">ATP-binding</keyword>
<keyword id="KW-0963">Cytoplasm</keyword>
<keyword id="KW-0221">Differentiation</keyword>
<keyword id="KW-0319">Glycerol metabolism</keyword>
<keyword id="KW-0418">Kinase</keyword>
<keyword id="KW-0472">Membrane</keyword>
<keyword id="KW-0496">Mitochondrion</keyword>
<keyword id="KW-1000">Mitochondrion outer membrane</keyword>
<keyword id="KW-0547">Nucleotide-binding</keyword>
<keyword id="KW-1267">Proteomics identification</keyword>
<keyword id="KW-1185">Reference proteome</keyword>
<keyword id="KW-0744">Spermatogenesis</keyword>
<keyword id="KW-0808">Transferase</keyword>
<keyword id="KW-0812">Transmembrane</keyword>
<keyword id="KW-1133">Transmembrane helix</keyword>
<name>GLPK2_HUMAN</name>
<dbReference type="EC" id="2.7.1.30"/>
<dbReference type="EMBL" id="X78712">
    <property type="protein sequence ID" value="CAA55365.1"/>
    <property type="molecule type" value="mRNA"/>
</dbReference>
<dbReference type="EMBL" id="AK292241">
    <property type="protein sequence ID" value="BAF84930.1"/>
    <property type="molecule type" value="mRNA"/>
</dbReference>
<dbReference type="EMBL" id="CH471057">
    <property type="protein sequence ID" value="EAX05842.1"/>
    <property type="molecule type" value="Genomic_DNA"/>
</dbReference>
<dbReference type="EMBL" id="BC029820">
    <property type="protein sequence ID" value="AAH29820.1"/>
    <property type="molecule type" value="mRNA"/>
</dbReference>
<dbReference type="EMBL" id="BC048274">
    <property type="protein sequence ID" value="AAH48274.2"/>
    <property type="molecule type" value="mRNA"/>
</dbReference>
<dbReference type="EMBL" id="BC058888">
    <property type="protein sequence ID" value="AAH58888.1"/>
    <property type="molecule type" value="mRNA"/>
</dbReference>
<dbReference type="CCDS" id="CCDS3585.1"/>
<dbReference type="PIR" id="I37417">
    <property type="entry name" value="I37417"/>
</dbReference>
<dbReference type="RefSeq" id="NP_149991.2">
    <property type="nucleotide sequence ID" value="NM_033214.2"/>
</dbReference>
<dbReference type="SMR" id="Q14410"/>
<dbReference type="BioGRID" id="108977">
    <property type="interactions" value="13"/>
</dbReference>
<dbReference type="FunCoup" id="Q14410">
    <property type="interactions" value="473"/>
</dbReference>
<dbReference type="IntAct" id="Q14410">
    <property type="interactions" value="5"/>
</dbReference>
<dbReference type="STRING" id="9606.ENSP00000351706"/>
<dbReference type="iPTMnet" id="Q14410"/>
<dbReference type="PhosphoSitePlus" id="Q14410"/>
<dbReference type="BioMuta" id="GK2"/>
<dbReference type="DMDM" id="212286188"/>
<dbReference type="jPOST" id="Q14410"/>
<dbReference type="MassIVE" id="Q14410"/>
<dbReference type="PaxDb" id="9606-ENSP00000351706"/>
<dbReference type="PeptideAtlas" id="Q14410"/>
<dbReference type="ProteomicsDB" id="59985"/>
<dbReference type="Pumba" id="Q14410"/>
<dbReference type="Antibodypedia" id="24966">
    <property type="antibodies" value="266 antibodies from 31 providers"/>
</dbReference>
<dbReference type="DNASU" id="2712"/>
<dbReference type="Ensembl" id="ENST00000358842.5">
    <property type="protein sequence ID" value="ENSP00000351706.3"/>
    <property type="gene ID" value="ENSG00000196475.6"/>
</dbReference>
<dbReference type="GeneID" id="2712"/>
<dbReference type="KEGG" id="hsa:2712"/>
<dbReference type="MANE-Select" id="ENST00000358842.5">
    <property type="protein sequence ID" value="ENSP00000351706.3"/>
    <property type="RefSeq nucleotide sequence ID" value="NM_033214.3"/>
    <property type="RefSeq protein sequence ID" value="NP_149991.2"/>
</dbReference>
<dbReference type="UCSC" id="uc003hlu.4">
    <property type="organism name" value="human"/>
</dbReference>
<dbReference type="AGR" id="HGNC:4291"/>
<dbReference type="CTD" id="2712"/>
<dbReference type="DisGeNET" id="2712"/>
<dbReference type="GeneCards" id="GK2"/>
<dbReference type="HGNC" id="HGNC:4291">
    <property type="gene designation" value="GK2"/>
</dbReference>
<dbReference type="HPA" id="ENSG00000196475">
    <property type="expression patterns" value="Tissue enriched (testis)"/>
</dbReference>
<dbReference type="MIM" id="600148">
    <property type="type" value="gene"/>
</dbReference>
<dbReference type="neXtProt" id="NX_Q14410"/>
<dbReference type="OpenTargets" id="ENSG00000196475"/>
<dbReference type="PharmGKB" id="PA28702"/>
<dbReference type="VEuPathDB" id="HostDB:ENSG00000196475"/>
<dbReference type="eggNOG" id="KOG2517">
    <property type="taxonomic scope" value="Eukaryota"/>
</dbReference>
<dbReference type="GeneTree" id="ENSGT01000000214434"/>
<dbReference type="HOGENOM" id="CLU_009281_2_3_1"/>
<dbReference type="InParanoid" id="Q14410"/>
<dbReference type="OMA" id="VQWMRDQ"/>
<dbReference type="OrthoDB" id="5422795at2759"/>
<dbReference type="PAN-GO" id="Q14410">
    <property type="GO annotations" value="6 GO annotations based on evolutionary models"/>
</dbReference>
<dbReference type="PhylomeDB" id="Q14410"/>
<dbReference type="TreeFam" id="TF321504"/>
<dbReference type="PathwayCommons" id="Q14410"/>
<dbReference type="Reactome" id="R-HSA-75109">
    <property type="pathway name" value="Triglyceride biosynthesis"/>
</dbReference>
<dbReference type="SignaLink" id="Q14410"/>
<dbReference type="UniPathway" id="UPA00618">
    <property type="reaction ID" value="UER00672"/>
</dbReference>
<dbReference type="BioGRID-ORCS" id="2712">
    <property type="hits" value="7 hits in 1141 CRISPR screens"/>
</dbReference>
<dbReference type="GenomeRNAi" id="2712"/>
<dbReference type="Pharos" id="Q14410">
    <property type="development level" value="Tbio"/>
</dbReference>
<dbReference type="PRO" id="PR:Q14410"/>
<dbReference type="Proteomes" id="UP000005640">
    <property type="component" value="Chromosome 4"/>
</dbReference>
<dbReference type="RNAct" id="Q14410">
    <property type="molecule type" value="protein"/>
</dbReference>
<dbReference type="Bgee" id="ENSG00000196475">
    <property type="expression patterns" value="Expressed in sperm and 36 other cell types or tissues"/>
</dbReference>
<dbReference type="ExpressionAtlas" id="Q14410">
    <property type="expression patterns" value="baseline and differential"/>
</dbReference>
<dbReference type="GO" id="GO:0070062">
    <property type="term" value="C:extracellular exosome"/>
    <property type="evidence" value="ECO:0007005"/>
    <property type="project" value="UniProtKB"/>
</dbReference>
<dbReference type="GO" id="GO:0005741">
    <property type="term" value="C:mitochondrial outer membrane"/>
    <property type="evidence" value="ECO:0000250"/>
    <property type="project" value="UniProtKB"/>
</dbReference>
<dbReference type="GO" id="GO:0005739">
    <property type="term" value="C:mitochondrion"/>
    <property type="evidence" value="ECO:0006056"/>
    <property type="project" value="FlyBase"/>
</dbReference>
<dbReference type="GO" id="GO:0097225">
    <property type="term" value="C:sperm midpiece"/>
    <property type="evidence" value="ECO:0000314"/>
    <property type="project" value="UniProtKB"/>
</dbReference>
<dbReference type="GO" id="GO:0097226">
    <property type="term" value="C:sperm mitochondrial sheath"/>
    <property type="evidence" value="ECO:0000250"/>
    <property type="project" value="UniProtKB"/>
</dbReference>
<dbReference type="GO" id="GO:0005524">
    <property type="term" value="F:ATP binding"/>
    <property type="evidence" value="ECO:0007669"/>
    <property type="project" value="UniProtKB-KW"/>
</dbReference>
<dbReference type="GO" id="GO:0004370">
    <property type="term" value="F:glycerol kinase activity"/>
    <property type="evidence" value="ECO:0000318"/>
    <property type="project" value="GO_Central"/>
</dbReference>
<dbReference type="GO" id="GO:0030317">
    <property type="term" value="P:flagellated sperm motility"/>
    <property type="evidence" value="ECO:0000250"/>
    <property type="project" value="UniProtKB"/>
</dbReference>
<dbReference type="GO" id="GO:0019563">
    <property type="term" value="P:glycerol catabolic process"/>
    <property type="evidence" value="ECO:0007669"/>
    <property type="project" value="UniProtKB-UniPathway"/>
</dbReference>
<dbReference type="GO" id="GO:0006071">
    <property type="term" value="P:glycerol metabolic process"/>
    <property type="evidence" value="ECO:0000318"/>
    <property type="project" value="GO_Central"/>
</dbReference>
<dbReference type="GO" id="GO:0046167">
    <property type="term" value="P:glycerol-3-phosphate biosynthetic process"/>
    <property type="evidence" value="ECO:0000318"/>
    <property type="project" value="GO_Central"/>
</dbReference>
<dbReference type="GO" id="GO:0120317">
    <property type="term" value="P:sperm mitochondrial sheath assembly"/>
    <property type="evidence" value="ECO:0000250"/>
    <property type="project" value="UniProtKB"/>
</dbReference>
<dbReference type="GO" id="GO:0007283">
    <property type="term" value="P:spermatogenesis"/>
    <property type="evidence" value="ECO:0000250"/>
    <property type="project" value="UniProtKB"/>
</dbReference>
<dbReference type="GO" id="GO:0006641">
    <property type="term" value="P:triglyceride metabolic process"/>
    <property type="evidence" value="ECO:0000318"/>
    <property type="project" value="GO_Central"/>
</dbReference>
<dbReference type="CDD" id="cd07792">
    <property type="entry name" value="ASKHA_NBD_FGGY_GK1-3-like"/>
    <property type="match status" value="1"/>
</dbReference>
<dbReference type="FunFam" id="3.30.420.40:FF:000043">
    <property type="entry name" value="glycerol kinase isoform X1"/>
    <property type="match status" value="1"/>
</dbReference>
<dbReference type="FunFam" id="3.30.420.40:FF:000033">
    <property type="entry name" value="glycerol kinase isoform X2"/>
    <property type="match status" value="1"/>
</dbReference>
<dbReference type="Gene3D" id="3.30.420.40">
    <property type="match status" value="2"/>
</dbReference>
<dbReference type="InterPro" id="IPR043129">
    <property type="entry name" value="ATPase_NBD"/>
</dbReference>
<dbReference type="InterPro" id="IPR000577">
    <property type="entry name" value="Carb_kinase_FGGY"/>
</dbReference>
<dbReference type="InterPro" id="IPR018483">
    <property type="entry name" value="Carb_kinase_FGGY_CS"/>
</dbReference>
<dbReference type="InterPro" id="IPR018485">
    <property type="entry name" value="FGGY_C"/>
</dbReference>
<dbReference type="InterPro" id="IPR018484">
    <property type="entry name" value="FGGY_N"/>
</dbReference>
<dbReference type="InterPro" id="IPR042018">
    <property type="entry name" value="GK1-3_metazoan-type"/>
</dbReference>
<dbReference type="InterPro" id="IPR005999">
    <property type="entry name" value="Glycerol_kin"/>
</dbReference>
<dbReference type="NCBIfam" id="TIGR01311">
    <property type="entry name" value="glycerol_kin"/>
    <property type="match status" value="1"/>
</dbReference>
<dbReference type="NCBIfam" id="NF000756">
    <property type="entry name" value="PRK00047.1"/>
    <property type="match status" value="1"/>
</dbReference>
<dbReference type="PANTHER" id="PTHR10196:SF46">
    <property type="entry name" value="GLYCEROL KINASE 2"/>
    <property type="match status" value="1"/>
</dbReference>
<dbReference type="PANTHER" id="PTHR10196">
    <property type="entry name" value="SUGAR KINASE"/>
    <property type="match status" value="1"/>
</dbReference>
<dbReference type="Pfam" id="PF02782">
    <property type="entry name" value="FGGY_C"/>
    <property type="match status" value="1"/>
</dbReference>
<dbReference type="Pfam" id="PF00370">
    <property type="entry name" value="FGGY_N"/>
    <property type="match status" value="1"/>
</dbReference>
<dbReference type="PIRSF" id="PIRSF000538">
    <property type="entry name" value="GlpK"/>
    <property type="match status" value="1"/>
</dbReference>
<dbReference type="SUPFAM" id="SSF53067">
    <property type="entry name" value="Actin-like ATPase domain"/>
    <property type="match status" value="2"/>
</dbReference>
<dbReference type="PROSITE" id="PS00933">
    <property type="entry name" value="FGGY_KINASES_1"/>
    <property type="match status" value="1"/>
</dbReference>
<dbReference type="PROSITE" id="PS00445">
    <property type="entry name" value="FGGY_KINASES_2"/>
    <property type="match status" value="1"/>
</dbReference>
<protein>
    <recommendedName>
        <fullName>Glycerol kinase 2</fullName>
        <shortName>GK 2</shortName>
        <shortName>Glycerokinase 2</shortName>
        <ecNumber>2.7.1.30</ecNumber>
    </recommendedName>
    <alternativeName>
        <fullName>ATP:glycerol 3-phosphotransferase 2</fullName>
    </alternativeName>
    <alternativeName>
        <fullName>Glycerol kinase, testis specific 2</fullName>
    </alternativeName>
</protein>
<reference key="1">
    <citation type="journal article" date="1994" name="Hum. Mol. Genet.">
        <title>The glycerol kinase gene family: structure of the Xp gene, and related intronless retroposons.</title>
        <authorList>
            <person name="Sargent C.A."/>
            <person name="Young C."/>
            <person name="Marsh S."/>
            <person name="Ferguson-Smith M.A."/>
            <person name="Affara N.A."/>
        </authorList>
    </citation>
    <scope>NUCLEOTIDE SEQUENCE [MRNA]</scope>
    <source>
        <tissue>Testis</tissue>
    </source>
</reference>
<reference key="2">
    <citation type="journal article" date="2004" name="Nat. Genet.">
        <title>Complete sequencing and characterization of 21,243 full-length human cDNAs.</title>
        <authorList>
            <person name="Ota T."/>
            <person name="Suzuki Y."/>
            <person name="Nishikawa T."/>
            <person name="Otsuki T."/>
            <person name="Sugiyama T."/>
            <person name="Irie R."/>
            <person name="Wakamatsu A."/>
            <person name="Hayashi K."/>
            <person name="Sato H."/>
            <person name="Nagai K."/>
            <person name="Kimura K."/>
            <person name="Makita H."/>
            <person name="Sekine M."/>
            <person name="Obayashi M."/>
            <person name="Nishi T."/>
            <person name="Shibahara T."/>
            <person name="Tanaka T."/>
            <person name="Ishii S."/>
            <person name="Yamamoto J."/>
            <person name="Saito K."/>
            <person name="Kawai Y."/>
            <person name="Isono Y."/>
            <person name="Nakamura Y."/>
            <person name="Nagahari K."/>
            <person name="Murakami K."/>
            <person name="Yasuda T."/>
            <person name="Iwayanagi T."/>
            <person name="Wagatsuma M."/>
            <person name="Shiratori A."/>
            <person name="Sudo H."/>
            <person name="Hosoiri T."/>
            <person name="Kaku Y."/>
            <person name="Kodaira H."/>
            <person name="Kondo H."/>
            <person name="Sugawara M."/>
            <person name="Takahashi M."/>
            <person name="Kanda K."/>
            <person name="Yokoi T."/>
            <person name="Furuya T."/>
            <person name="Kikkawa E."/>
            <person name="Omura Y."/>
            <person name="Abe K."/>
            <person name="Kamihara K."/>
            <person name="Katsuta N."/>
            <person name="Sato K."/>
            <person name="Tanikawa M."/>
            <person name="Yamazaki M."/>
            <person name="Ninomiya K."/>
            <person name="Ishibashi T."/>
            <person name="Yamashita H."/>
            <person name="Murakawa K."/>
            <person name="Fujimori K."/>
            <person name="Tanai H."/>
            <person name="Kimata M."/>
            <person name="Watanabe M."/>
            <person name="Hiraoka S."/>
            <person name="Chiba Y."/>
            <person name="Ishida S."/>
            <person name="Ono Y."/>
            <person name="Takiguchi S."/>
            <person name="Watanabe S."/>
            <person name="Yosida M."/>
            <person name="Hotuta T."/>
            <person name="Kusano J."/>
            <person name="Kanehori K."/>
            <person name="Takahashi-Fujii A."/>
            <person name="Hara H."/>
            <person name="Tanase T.-O."/>
            <person name="Nomura Y."/>
            <person name="Togiya S."/>
            <person name="Komai F."/>
            <person name="Hara R."/>
            <person name="Takeuchi K."/>
            <person name="Arita M."/>
            <person name="Imose N."/>
            <person name="Musashino K."/>
            <person name="Yuuki H."/>
            <person name="Oshima A."/>
            <person name="Sasaki N."/>
            <person name="Aotsuka S."/>
            <person name="Yoshikawa Y."/>
            <person name="Matsunawa H."/>
            <person name="Ichihara T."/>
            <person name="Shiohata N."/>
            <person name="Sano S."/>
            <person name="Moriya S."/>
            <person name="Momiyama H."/>
            <person name="Satoh N."/>
            <person name="Takami S."/>
            <person name="Terashima Y."/>
            <person name="Suzuki O."/>
            <person name="Nakagawa S."/>
            <person name="Senoh A."/>
            <person name="Mizoguchi H."/>
            <person name="Goto Y."/>
            <person name="Shimizu F."/>
            <person name="Wakebe H."/>
            <person name="Hishigaki H."/>
            <person name="Watanabe T."/>
            <person name="Sugiyama A."/>
            <person name="Takemoto M."/>
            <person name="Kawakami B."/>
            <person name="Yamazaki M."/>
            <person name="Watanabe K."/>
            <person name="Kumagai A."/>
            <person name="Itakura S."/>
            <person name="Fukuzumi Y."/>
            <person name="Fujimori Y."/>
            <person name="Komiyama M."/>
            <person name="Tashiro H."/>
            <person name="Tanigami A."/>
            <person name="Fujiwara T."/>
            <person name="Ono T."/>
            <person name="Yamada K."/>
            <person name="Fujii Y."/>
            <person name="Ozaki K."/>
            <person name="Hirao M."/>
            <person name="Ohmori Y."/>
            <person name="Kawabata A."/>
            <person name="Hikiji T."/>
            <person name="Kobatake N."/>
            <person name="Inagaki H."/>
            <person name="Ikema Y."/>
            <person name="Okamoto S."/>
            <person name="Okitani R."/>
            <person name="Kawakami T."/>
            <person name="Noguchi S."/>
            <person name="Itoh T."/>
            <person name="Shigeta K."/>
            <person name="Senba T."/>
            <person name="Matsumura K."/>
            <person name="Nakajima Y."/>
            <person name="Mizuno T."/>
            <person name="Morinaga M."/>
            <person name="Sasaki M."/>
            <person name="Togashi T."/>
            <person name="Oyama M."/>
            <person name="Hata H."/>
            <person name="Watanabe M."/>
            <person name="Komatsu T."/>
            <person name="Mizushima-Sugano J."/>
            <person name="Satoh T."/>
            <person name="Shirai Y."/>
            <person name="Takahashi Y."/>
            <person name="Nakagawa K."/>
            <person name="Okumura K."/>
            <person name="Nagase T."/>
            <person name="Nomura N."/>
            <person name="Kikuchi H."/>
            <person name="Masuho Y."/>
            <person name="Yamashita R."/>
            <person name="Nakai K."/>
            <person name="Yada T."/>
            <person name="Nakamura Y."/>
            <person name="Ohara O."/>
            <person name="Isogai T."/>
            <person name="Sugano S."/>
        </authorList>
    </citation>
    <scope>NUCLEOTIDE SEQUENCE [LARGE SCALE MRNA]</scope>
    <source>
        <tissue>Testis</tissue>
    </source>
</reference>
<reference key="3">
    <citation type="submission" date="2005-07" db="EMBL/GenBank/DDBJ databases">
        <authorList>
            <person name="Mural R.J."/>
            <person name="Istrail S."/>
            <person name="Sutton G.G."/>
            <person name="Florea L."/>
            <person name="Halpern A.L."/>
            <person name="Mobarry C.M."/>
            <person name="Lippert R."/>
            <person name="Walenz B."/>
            <person name="Shatkay H."/>
            <person name="Dew I."/>
            <person name="Miller J.R."/>
            <person name="Flanigan M.J."/>
            <person name="Edwards N.J."/>
            <person name="Bolanos R."/>
            <person name="Fasulo D."/>
            <person name="Halldorsson B.V."/>
            <person name="Hannenhalli S."/>
            <person name="Turner R."/>
            <person name="Yooseph S."/>
            <person name="Lu F."/>
            <person name="Nusskern D.R."/>
            <person name="Shue B.C."/>
            <person name="Zheng X.H."/>
            <person name="Zhong F."/>
            <person name="Delcher A.L."/>
            <person name="Huson D.H."/>
            <person name="Kravitz S.A."/>
            <person name="Mouchard L."/>
            <person name="Reinert K."/>
            <person name="Remington K.A."/>
            <person name="Clark A.G."/>
            <person name="Waterman M.S."/>
            <person name="Eichler E.E."/>
            <person name="Adams M.D."/>
            <person name="Hunkapiller M.W."/>
            <person name="Myers E.W."/>
            <person name="Venter J.C."/>
        </authorList>
    </citation>
    <scope>NUCLEOTIDE SEQUENCE [LARGE SCALE GENOMIC DNA]</scope>
</reference>
<reference key="4">
    <citation type="journal article" date="2004" name="Genome Res.">
        <title>The status, quality, and expansion of the NIH full-length cDNA project: the Mammalian Gene Collection (MGC).</title>
        <authorList>
            <consortium name="The MGC Project Team"/>
        </authorList>
    </citation>
    <scope>NUCLEOTIDE SEQUENCE [LARGE SCALE MRNA]</scope>
    <source>
        <tissue>Brain</tissue>
    </source>
</reference>
<reference key="5">
    <citation type="journal article" date="2017" name="Cell Discov.">
        <title>Glycerol kinase-like proteins cooperate with Pld6 in regulating sperm mitochondrial sheath formation and male fertility.</title>
        <authorList>
            <person name="Chen Y."/>
            <person name="Liang P."/>
            <person name="Huang Y."/>
            <person name="Li M."/>
            <person name="Zhang X."/>
            <person name="Ding C."/>
            <person name="Feng J."/>
            <person name="Zhang Z."/>
            <person name="Zhang X."/>
            <person name="Gao Y."/>
            <person name="Zhang Q."/>
            <person name="Cao S."/>
            <person name="Zheng H."/>
            <person name="Liu D."/>
            <person name="Songyang Z."/>
            <person name="Huang J."/>
        </authorList>
    </citation>
    <scope>FUNCTION</scope>
    <scope>INTERACTION WITH PLD6</scope>
    <scope>TISSUE SPECIFICITY</scope>
</reference>
<reference key="6">
    <citation type="journal article" date="2021" name="Proc. Natl. Acad. Sci. U.S.A.">
        <title>ARMC12 regulates spatiotemporal mitochondrial dynamics during spermiogenesis and is required for male fertility.</title>
        <authorList>
            <person name="Shimada K."/>
            <person name="Park S."/>
            <person name="Miyata H."/>
            <person name="Yu Z."/>
            <person name="Morohoshi A."/>
            <person name="Oura S."/>
            <person name="Matzuk M.M."/>
            <person name="Ikawa M."/>
        </authorList>
    </citation>
    <scope>TISSUE SPECIFICITY</scope>
</reference>
<feature type="chain" id="PRO_0000059536" description="Glycerol kinase 2">
    <location>
        <begin position="1"/>
        <end position="553"/>
    </location>
</feature>
<feature type="transmembrane region" description="Helical" evidence="3">
    <location>
        <begin position="526"/>
        <end position="546"/>
    </location>
</feature>
<feature type="binding site" evidence="1">
    <location>
        <position position="20"/>
    </location>
    <ligand>
        <name>substrate</name>
    </ligand>
</feature>
<feature type="binding site" evidence="1">
    <location>
        <position position="24"/>
    </location>
    <ligand>
        <name>ATP</name>
        <dbReference type="ChEBI" id="CHEBI:30616"/>
    </ligand>
</feature>
<feature type="binding site" evidence="1">
    <location>
        <position position="94"/>
    </location>
    <ligand>
        <name>substrate</name>
    </ligand>
</feature>
<feature type="binding site" evidence="1">
    <location>
        <position position="148"/>
    </location>
    <ligand>
        <name>substrate</name>
    </ligand>
</feature>
<feature type="binding site" evidence="1">
    <location>
        <position position="259"/>
    </location>
    <ligand>
        <name>substrate</name>
    </ligand>
</feature>
<feature type="binding site" evidence="1">
    <location>
        <position position="281"/>
    </location>
    <ligand>
        <name>ATP</name>
        <dbReference type="ChEBI" id="CHEBI:30616"/>
    </ligand>
</feature>
<feature type="binding site" evidence="1">
    <location>
        <position position="326"/>
    </location>
    <ligand>
        <name>ATP</name>
        <dbReference type="ChEBI" id="CHEBI:30616"/>
    </ligand>
</feature>
<feature type="binding site" evidence="1">
    <location>
        <begin position="427"/>
        <end position="431"/>
    </location>
    <ligand>
        <name>ATP</name>
        <dbReference type="ChEBI" id="CHEBI:30616"/>
    </ligand>
</feature>
<feature type="sequence conflict" description="In Ref. 2; BAF84930." evidence="6" ref="2">
    <original>E</original>
    <variation>G</variation>
    <location>
        <position position="238"/>
    </location>
</feature>
<feature type="sequence conflict" description="In Ref. 2; BAF84930." evidence="6" ref="2">
    <original>A</original>
    <variation>T</variation>
    <location>
        <position position="369"/>
    </location>
</feature>
<feature type="sequence conflict" description="In Ref. 2; BAF84930." evidence="6" ref="2">
    <original>R</original>
    <variation>C</variation>
    <location>
        <position position="499"/>
    </location>
</feature>
<feature type="sequence conflict" description="In Ref. 1; CAA55365." evidence="6" ref="1">
    <original>S</original>
    <variation>C</variation>
    <location>
        <position position="528"/>
    </location>
</feature>
<sequence length="553" mass="60594">MAAPKTAAVGPLVGAVVQGTNSTRFLVFNSKTAELLSHHKVELTQEFPKEGWVEQDPKEILQSVYECIARTCEKLDELNIDISNIKAVGVSNQRETTVIWDKLTGEPLYNAVVWLDLRTQTTVEDLSKKIPGNSNFVKSKTGLPLSTYFSAVKLRWMLDNVRNVQKAVEEGRALFGTIDSWLIWSLTGGVNGGVHCTDVTNASRTMLFNIHSLEWDKELCDFFEIPMDLLPNVFSSSEIYGLIKTGALEGVPISGCLGDQCAALVGQMCFQEGQAKNTYGTGCFLLCNTGRKCVFSEHGLLTTVAYKLGREKPAYYALEGSVAIAGAVIRWLRDNLGIIETSGDIERLAKEVGTSYGCYFVPAFSGLYAPYWEPSARGILCGLTQFTNKCHIAFAALEAVCFQTREILEAMNRDCGIPLRHLQVDGGMTNNKVLMQLQADILHIPVIKPFMPETTALGAAMAAGAAEGVSVWSLEPQALSVLRMERFEPQIQATESEIRYATWKKAVMKSMGWVTSQSPEGGDPSIFSSLPLGFFIVSSMVMLIGARYISGVP</sequence>
<comment type="function">
    <text evidence="2 4">Key enzyme in the regulation of glycerol uptake and metabolism. Essential for male fertility and sperm mitochondrial sheath formation (By similarity). Required for proper arrangement of crescent-like mitochondria to form the mitochondrial sheath during spermatogenesis (By similarity). Can induce mitochondrial clustering through interactions with PLD6 and up-regulation of phosphatidic acid synthesis in the mitochondria (PubMed:28852571).</text>
</comment>
<comment type="catalytic activity">
    <reaction>
        <text>glycerol + ATP = sn-glycerol 3-phosphate + ADP + H(+)</text>
        <dbReference type="Rhea" id="RHEA:21644"/>
        <dbReference type="ChEBI" id="CHEBI:15378"/>
        <dbReference type="ChEBI" id="CHEBI:17754"/>
        <dbReference type="ChEBI" id="CHEBI:30616"/>
        <dbReference type="ChEBI" id="CHEBI:57597"/>
        <dbReference type="ChEBI" id="CHEBI:456216"/>
        <dbReference type="EC" id="2.7.1.30"/>
    </reaction>
</comment>
<comment type="pathway">
    <text>Polyol metabolism; glycerol degradation via glycerol kinase pathway; sn-glycerol 3-phosphate from glycerol: step 1/1.</text>
</comment>
<comment type="subunit">
    <text evidence="2 4">Interacts with ARMC12 (By similarity). Interacts with PLD6 (PubMed:28852571).</text>
</comment>
<comment type="subcellular location">
    <subcellularLocation>
        <location evidence="2">Mitochondrion outer membrane</location>
        <topology evidence="2">Single-pass type IV membrane protein</topology>
    </subcellularLocation>
    <subcellularLocation>
        <location evidence="1">Cytoplasm</location>
    </subcellularLocation>
    <text evidence="2">In sperm the majority of the enzyme is bound to mitochondria.</text>
</comment>
<comment type="tissue specificity">
    <text evidence="4 5">Testis-specific (PubMed:33536340). Expressed in the midpiece of spermatozoa (PubMed:28852571).</text>
</comment>
<comment type="similarity">
    <text evidence="6">Belongs to the FGGY kinase family.</text>
</comment>
<organism>
    <name type="scientific">Homo sapiens</name>
    <name type="common">Human</name>
    <dbReference type="NCBI Taxonomy" id="9606"/>
    <lineage>
        <taxon>Eukaryota</taxon>
        <taxon>Metazoa</taxon>
        <taxon>Chordata</taxon>
        <taxon>Craniata</taxon>
        <taxon>Vertebrata</taxon>
        <taxon>Euteleostomi</taxon>
        <taxon>Mammalia</taxon>
        <taxon>Eutheria</taxon>
        <taxon>Euarchontoglires</taxon>
        <taxon>Primates</taxon>
        <taxon>Haplorrhini</taxon>
        <taxon>Catarrhini</taxon>
        <taxon>Hominidae</taxon>
        <taxon>Homo</taxon>
    </lineage>
</organism>
<proteinExistence type="evidence at protein level"/>